<organism>
    <name type="scientific">Sus scrofa</name>
    <name type="common">Pig</name>
    <dbReference type="NCBI Taxonomy" id="9823"/>
    <lineage>
        <taxon>Eukaryota</taxon>
        <taxon>Metazoa</taxon>
        <taxon>Chordata</taxon>
        <taxon>Craniata</taxon>
        <taxon>Vertebrata</taxon>
        <taxon>Euteleostomi</taxon>
        <taxon>Mammalia</taxon>
        <taxon>Eutheria</taxon>
        <taxon>Laurasiatheria</taxon>
        <taxon>Artiodactyla</taxon>
        <taxon>Suina</taxon>
        <taxon>Suidae</taxon>
        <taxon>Sus</taxon>
    </lineage>
</organism>
<comment type="function">
    <text evidence="1">Required for mannose-6-phosphate-dependent trafficking of lysosomal enzymes. LYSET bridges GlcNAc-1-phosphate transferase (GNPTAB), to the membrane-bound transcription factor site-1 protease (MBTPS1), thus allowing proteolytic activation of the GNPTAB. GNPTAB is involved in the regulation of M6P-dependent Golgi-to-lysosome trafficking of lysosomal enzymes. LYSET is thus an essential factor for maturation and delivery of lysosomal hydrolases.</text>
</comment>
<comment type="subunit">
    <text evidence="1">Interacts with GNPTAB; this interaction is important for proper localization of GNPTAB in Golgi stacks. Interacts with MBTPS1.</text>
</comment>
<comment type="subcellular location">
    <subcellularLocation>
        <location evidence="1">Golgi apparatus membrane</location>
        <topology evidence="2">Multi-pass membrane protein</topology>
    </subcellularLocation>
</comment>
<comment type="similarity">
    <text evidence="3">Belongs to the LYSET family.</text>
</comment>
<gene>
    <name type="primary">LYSET</name>
    <name type="synonym">TMEM251</name>
</gene>
<name>LYSET_PIG</name>
<protein>
    <recommendedName>
        <fullName>Lysosomal enzyme trafficking factor</fullName>
    </recommendedName>
    <alternativeName>
        <fullName>Transmembrane protein 251</fullName>
    </alternativeName>
</protein>
<evidence type="ECO:0000250" key="1">
    <source>
        <dbReference type="UniProtKB" id="Q8N6I4"/>
    </source>
</evidence>
<evidence type="ECO:0000255" key="2"/>
<evidence type="ECO:0000305" key="3"/>
<feature type="chain" id="PRO_0000089918" description="Lysosomal enzyme trafficking factor">
    <location>
        <begin position="1"/>
        <end position="163"/>
    </location>
</feature>
<feature type="transmembrane region" description="Helical" evidence="2">
    <location>
        <begin position="40"/>
        <end position="60"/>
    </location>
</feature>
<feature type="transmembrane region" description="Helical" evidence="2">
    <location>
        <begin position="98"/>
        <end position="118"/>
    </location>
</feature>
<keyword id="KW-0333">Golgi apparatus</keyword>
<keyword id="KW-0472">Membrane</keyword>
<keyword id="KW-1185">Reference proteome</keyword>
<keyword id="KW-0812">Transmembrane</keyword>
<keyword id="KW-1133">Transmembrane helix</keyword>
<sequence>MPKPPDYSELSDSLTLPVGTGRFSGPLHRAWRMMNFRQRMGWIGVGLYLLASAAAFYYVFEINETYNRLALEHIQQHPEEPLEGTTWTHSLKSRLLSLPFWFWTIIFLIPYLQMFLFLYSCTRADPKTVGYCIIPICLAVICNRHQAFVKASNQISRLQLIDT</sequence>
<proteinExistence type="evidence at transcript level"/>
<accession>Q6QA74</accession>
<reference key="1">
    <citation type="submission" date="2004-02" db="EMBL/GenBank/DDBJ databases">
        <title>Identification of differentially expressed genes in porcine embryos.</title>
        <authorList>
            <person name="Lee H.Y."/>
            <person name="Cui X.S."/>
            <person name="Jeong Y.J."/>
            <person name="Shin M.L."/>
            <person name="Hwang K.C."/>
            <person name="Kim N.H."/>
        </authorList>
    </citation>
    <scope>NUCLEOTIDE SEQUENCE [MRNA]</scope>
    <source>
        <tissue>Embryo</tissue>
    </source>
</reference>
<dbReference type="EMBL" id="AY550926">
    <property type="protein sequence ID" value="AAS59064.1"/>
    <property type="molecule type" value="mRNA"/>
</dbReference>
<dbReference type="RefSeq" id="NP_001001629.1">
    <property type="nucleotide sequence ID" value="NM_001001629.1"/>
</dbReference>
<dbReference type="FunCoup" id="Q6QA74">
    <property type="interactions" value="690"/>
</dbReference>
<dbReference type="STRING" id="9823.ENSSSCP00000002660"/>
<dbReference type="PaxDb" id="9823-ENSSSCP00000002660"/>
<dbReference type="GeneID" id="414384"/>
<dbReference type="KEGG" id="ssc:414384"/>
<dbReference type="CTD" id="26175"/>
<dbReference type="eggNOG" id="ENOG502RY2J">
    <property type="taxonomic scope" value="Eukaryota"/>
</dbReference>
<dbReference type="HOGENOM" id="CLU_133007_0_0_1"/>
<dbReference type="InParanoid" id="Q6QA74"/>
<dbReference type="OrthoDB" id="6273523at2759"/>
<dbReference type="TreeFam" id="TF332722"/>
<dbReference type="Proteomes" id="UP000008227">
    <property type="component" value="Unplaced"/>
</dbReference>
<dbReference type="Proteomes" id="UP000314985">
    <property type="component" value="Unplaced"/>
</dbReference>
<dbReference type="Proteomes" id="UP000694570">
    <property type="component" value="Unplaced"/>
</dbReference>
<dbReference type="Proteomes" id="UP000694571">
    <property type="component" value="Unplaced"/>
</dbReference>
<dbReference type="Proteomes" id="UP000694720">
    <property type="component" value="Unplaced"/>
</dbReference>
<dbReference type="Proteomes" id="UP000694722">
    <property type="component" value="Unplaced"/>
</dbReference>
<dbReference type="Proteomes" id="UP000694723">
    <property type="component" value="Unplaced"/>
</dbReference>
<dbReference type="Proteomes" id="UP000694724">
    <property type="component" value="Unplaced"/>
</dbReference>
<dbReference type="Proteomes" id="UP000694725">
    <property type="component" value="Unplaced"/>
</dbReference>
<dbReference type="Proteomes" id="UP000694726">
    <property type="component" value="Unplaced"/>
</dbReference>
<dbReference type="Proteomes" id="UP000694727">
    <property type="component" value="Unplaced"/>
</dbReference>
<dbReference type="Proteomes" id="UP000694728">
    <property type="component" value="Unplaced"/>
</dbReference>
<dbReference type="GO" id="GO:0005794">
    <property type="term" value="C:Golgi apparatus"/>
    <property type="evidence" value="ECO:0000250"/>
    <property type="project" value="UniProtKB"/>
</dbReference>
<dbReference type="GO" id="GO:0000139">
    <property type="term" value="C:Golgi membrane"/>
    <property type="evidence" value="ECO:0007669"/>
    <property type="project" value="UniProtKB-SubCell"/>
</dbReference>
<dbReference type="GO" id="GO:0007040">
    <property type="term" value="P:lysosome organization"/>
    <property type="evidence" value="ECO:0000250"/>
    <property type="project" value="UniProtKB"/>
</dbReference>
<dbReference type="GO" id="GO:0060627">
    <property type="term" value="P:regulation of vesicle-mediated transport"/>
    <property type="evidence" value="ECO:0000250"/>
    <property type="project" value="UniProtKB"/>
</dbReference>
<dbReference type="InterPro" id="IPR028024">
    <property type="entry name" value="LYSET"/>
</dbReference>
<dbReference type="PANTHER" id="PTHR31925:SF1">
    <property type="entry name" value="LYSOSOMAL ENZYME TRAFFICKING FACTOR"/>
    <property type="match status" value="1"/>
</dbReference>
<dbReference type="PANTHER" id="PTHR31925">
    <property type="entry name" value="TRANSMEMBRANE PROTEIN 251"/>
    <property type="match status" value="1"/>
</dbReference>
<dbReference type="Pfam" id="PF15190">
    <property type="entry name" value="TMEM251"/>
    <property type="match status" value="1"/>
</dbReference>